<protein>
    <recommendedName>
        <fullName evidence="1">NAD(P)H-quinone oxidoreductase chain 4, chloroplastic</fullName>
        <ecNumber evidence="1">7.1.1.-</ecNumber>
    </recommendedName>
    <alternativeName>
        <fullName evidence="1">NAD(P)H dehydrogenase, chain 4</fullName>
    </alternativeName>
    <alternativeName>
        <fullName evidence="1">NADH-plastoquinone oxidoreductase chain 4</fullName>
    </alternativeName>
</protein>
<accession>Q32RL9</accession>
<organism>
    <name type="scientific">Zygnema circumcarinatum</name>
    <name type="common">Green alga</name>
    <dbReference type="NCBI Taxonomy" id="35869"/>
    <lineage>
        <taxon>Eukaryota</taxon>
        <taxon>Viridiplantae</taxon>
        <taxon>Streptophyta</taxon>
        <taxon>Zygnematophyceae</taxon>
        <taxon>Zygnematophycidae</taxon>
        <taxon>Zygnematales</taxon>
        <taxon>Zygnemataceae</taxon>
        <taxon>Zygnema</taxon>
    </lineage>
</organism>
<keyword id="KW-0150">Chloroplast</keyword>
<keyword id="KW-0472">Membrane</keyword>
<keyword id="KW-0520">NAD</keyword>
<keyword id="KW-0521">NADP</keyword>
<keyword id="KW-0934">Plastid</keyword>
<keyword id="KW-0618">Plastoquinone</keyword>
<keyword id="KW-0874">Quinone</keyword>
<keyword id="KW-0793">Thylakoid</keyword>
<keyword id="KW-1278">Translocase</keyword>
<keyword id="KW-0812">Transmembrane</keyword>
<keyword id="KW-1133">Transmembrane helix</keyword>
<reference key="1">
    <citation type="journal article" date="2005" name="BMC Biol.">
        <title>The complete chloroplast DNA sequences of the charophycean green algae Staurastrum and Zygnema reveal that the chloroplast genome underwent extensive changes during the evolution of the Zygnematales.</title>
        <authorList>
            <person name="Turmel M."/>
            <person name="Otis C."/>
            <person name="Lemieux C."/>
        </authorList>
    </citation>
    <scope>NUCLEOTIDE SEQUENCE [LARGE SCALE GENOMIC DNA]</scope>
</reference>
<name>NU4C_ZYGCR</name>
<sequence length="512" mass="56601">MTNVPWLTAIVLFPVSAGLLIPLLPGRGNHIVRWYALGICLLDLILMTYVFGCYYNLSDLPVQLKEDYCWIEILDFHWRLGVDGLSIGLILLTGFVTTLATLAAWPVTRNPKLFYFLMLAMYSGQLGLFASQDILLFFVMWELELIPVYLLLSMWGGRRRLYAATKFILYTAGGSIFLLAGLLTASLWGSNAPVLDFEILSHKSYPLGLEILIYLGFLIAYAVKLPAFPLHTWLPDTHGEAHYSTCMLLAGILLKMGGYGFIRVNMELLPHAHTVFAPWLVALGAYQIVYAALVSFAQRNLKRRIAYSSVSHMGFVLVGAGSLSDLGLSGAMLQMISHGLIGASLFFLAGTSYDRTRTLMLREMGAWASQMPKMFAMFTTCAMASLALPGMSGFVSELMVFFGMVTSAAYSPYFRAIITLIEAVGIILTPIYLLSMVRQMFYGSRISSVSVFNNIDAGPREVFVLGSLLLPMIGIGIYPNFALPLWSAKTQAVASLVQPTSILYSQTLYNIQ</sequence>
<feature type="chain" id="PRO_0000275925" description="NAD(P)H-quinone oxidoreductase chain 4, chloroplastic">
    <location>
        <begin position="1"/>
        <end position="512"/>
    </location>
</feature>
<feature type="transmembrane region" description="Helical" evidence="1">
    <location>
        <begin position="4"/>
        <end position="24"/>
    </location>
</feature>
<feature type="transmembrane region" description="Helical" evidence="1">
    <location>
        <begin position="34"/>
        <end position="54"/>
    </location>
</feature>
<feature type="transmembrane region" description="Helical" evidence="1">
    <location>
        <begin position="87"/>
        <end position="107"/>
    </location>
</feature>
<feature type="transmembrane region" description="Helical" evidence="1">
    <location>
        <begin position="111"/>
        <end position="131"/>
    </location>
</feature>
<feature type="transmembrane region" description="Helical" evidence="1">
    <location>
        <begin position="134"/>
        <end position="154"/>
    </location>
</feature>
<feature type="transmembrane region" description="Helical" evidence="1">
    <location>
        <begin position="167"/>
        <end position="187"/>
    </location>
</feature>
<feature type="transmembrane region" description="Helical" evidence="1">
    <location>
        <begin position="208"/>
        <end position="228"/>
    </location>
</feature>
<feature type="transmembrane region" description="Helical" evidence="1">
    <location>
        <begin position="242"/>
        <end position="262"/>
    </location>
</feature>
<feature type="transmembrane region" description="Helical" evidence="1">
    <location>
        <begin position="274"/>
        <end position="294"/>
    </location>
</feature>
<feature type="transmembrane region" description="Helical" evidence="1">
    <location>
        <begin position="308"/>
        <end position="328"/>
    </location>
</feature>
<feature type="transmembrane region" description="Helical" evidence="1">
    <location>
        <begin position="330"/>
        <end position="350"/>
    </location>
</feature>
<feature type="transmembrane region" description="Helical" evidence="1">
    <location>
        <begin position="374"/>
        <end position="396"/>
    </location>
</feature>
<feature type="transmembrane region" description="Helical" evidence="1">
    <location>
        <begin position="417"/>
        <end position="437"/>
    </location>
</feature>
<feature type="transmembrane region" description="Helical" evidence="1">
    <location>
        <begin position="462"/>
        <end position="482"/>
    </location>
</feature>
<evidence type="ECO:0000255" key="1">
    <source>
        <dbReference type="HAMAP-Rule" id="MF_00491"/>
    </source>
</evidence>
<proteinExistence type="inferred from homology"/>
<geneLocation type="chloroplast"/>
<comment type="catalytic activity">
    <reaction evidence="1">
        <text>a plastoquinone + NADH + (n+1) H(+)(in) = a plastoquinol + NAD(+) + n H(+)(out)</text>
        <dbReference type="Rhea" id="RHEA:42608"/>
        <dbReference type="Rhea" id="RHEA-COMP:9561"/>
        <dbReference type="Rhea" id="RHEA-COMP:9562"/>
        <dbReference type="ChEBI" id="CHEBI:15378"/>
        <dbReference type="ChEBI" id="CHEBI:17757"/>
        <dbReference type="ChEBI" id="CHEBI:57540"/>
        <dbReference type="ChEBI" id="CHEBI:57945"/>
        <dbReference type="ChEBI" id="CHEBI:62192"/>
    </reaction>
</comment>
<comment type="catalytic activity">
    <reaction evidence="1">
        <text>a plastoquinone + NADPH + (n+1) H(+)(in) = a plastoquinol + NADP(+) + n H(+)(out)</text>
        <dbReference type="Rhea" id="RHEA:42612"/>
        <dbReference type="Rhea" id="RHEA-COMP:9561"/>
        <dbReference type="Rhea" id="RHEA-COMP:9562"/>
        <dbReference type="ChEBI" id="CHEBI:15378"/>
        <dbReference type="ChEBI" id="CHEBI:17757"/>
        <dbReference type="ChEBI" id="CHEBI:57783"/>
        <dbReference type="ChEBI" id="CHEBI:58349"/>
        <dbReference type="ChEBI" id="CHEBI:62192"/>
    </reaction>
</comment>
<comment type="subcellular location">
    <subcellularLocation>
        <location evidence="1">Plastid</location>
        <location evidence="1">Chloroplast thylakoid membrane</location>
        <topology evidence="1">Multi-pass membrane protein</topology>
    </subcellularLocation>
</comment>
<comment type="similarity">
    <text evidence="1">Belongs to the complex I subunit 4 family.</text>
</comment>
<dbReference type="EC" id="7.1.1.-" evidence="1"/>
<dbReference type="EMBL" id="AY958086">
    <property type="protein sequence ID" value="AAX45815.1"/>
    <property type="molecule type" value="Genomic_DNA"/>
</dbReference>
<dbReference type="RefSeq" id="YP_636507.1">
    <property type="nucleotide sequence ID" value="NC_008117.1"/>
</dbReference>
<dbReference type="SMR" id="Q32RL9"/>
<dbReference type="GeneID" id="4108135"/>
<dbReference type="GO" id="GO:0009535">
    <property type="term" value="C:chloroplast thylakoid membrane"/>
    <property type="evidence" value="ECO:0007669"/>
    <property type="project" value="UniProtKB-SubCell"/>
</dbReference>
<dbReference type="GO" id="GO:0008137">
    <property type="term" value="F:NADH dehydrogenase (ubiquinone) activity"/>
    <property type="evidence" value="ECO:0007669"/>
    <property type="project" value="InterPro"/>
</dbReference>
<dbReference type="GO" id="GO:0048039">
    <property type="term" value="F:ubiquinone binding"/>
    <property type="evidence" value="ECO:0007669"/>
    <property type="project" value="TreeGrafter"/>
</dbReference>
<dbReference type="GO" id="GO:0042773">
    <property type="term" value="P:ATP synthesis coupled electron transport"/>
    <property type="evidence" value="ECO:0007669"/>
    <property type="project" value="InterPro"/>
</dbReference>
<dbReference type="GO" id="GO:0015990">
    <property type="term" value="P:electron transport coupled proton transport"/>
    <property type="evidence" value="ECO:0007669"/>
    <property type="project" value="TreeGrafter"/>
</dbReference>
<dbReference type="HAMAP" id="MF_00491">
    <property type="entry name" value="NDH1_NuoM"/>
    <property type="match status" value="1"/>
</dbReference>
<dbReference type="InterPro" id="IPR022997">
    <property type="entry name" value="NADH_Q_OxRdtase_chain4"/>
</dbReference>
<dbReference type="InterPro" id="IPR010227">
    <property type="entry name" value="NADH_Q_OxRdtase_chainM/4"/>
</dbReference>
<dbReference type="InterPro" id="IPR003918">
    <property type="entry name" value="NADH_UbQ_OxRdtase"/>
</dbReference>
<dbReference type="InterPro" id="IPR001750">
    <property type="entry name" value="ND/Mrp_TM"/>
</dbReference>
<dbReference type="NCBIfam" id="TIGR01972">
    <property type="entry name" value="NDH_I_M"/>
    <property type="match status" value="1"/>
</dbReference>
<dbReference type="NCBIfam" id="NF009212">
    <property type="entry name" value="PRK12561.1"/>
    <property type="match status" value="1"/>
</dbReference>
<dbReference type="PANTHER" id="PTHR43507:SF21">
    <property type="entry name" value="NAD(P)H-QUINONE OXIDOREDUCTASE CHAIN 4, CHLOROPLASTIC"/>
    <property type="match status" value="1"/>
</dbReference>
<dbReference type="PANTHER" id="PTHR43507">
    <property type="entry name" value="NADH-UBIQUINONE OXIDOREDUCTASE CHAIN 4"/>
    <property type="match status" value="1"/>
</dbReference>
<dbReference type="Pfam" id="PF00361">
    <property type="entry name" value="Proton_antipo_M"/>
    <property type="match status" value="1"/>
</dbReference>
<dbReference type="PRINTS" id="PR01437">
    <property type="entry name" value="NUOXDRDTASE4"/>
</dbReference>
<gene>
    <name evidence="1" type="primary">ndhD</name>
</gene>